<sequence>MISKPDKNKLRLKRHKRIRGKISGTAERPRLSVFRSNKNIYAQLIDDVEGVTLASASTNDKNISAEGSKMEQAAEVGKALAETAAKKNIKSVVFDRSGYLYHGRIQALADAARENGLEF</sequence>
<dbReference type="EMBL" id="AE017198">
    <property type="protein sequence ID" value="AAS08341.1"/>
    <property type="molecule type" value="Genomic_DNA"/>
</dbReference>
<dbReference type="RefSeq" id="WP_004895852.1">
    <property type="nucleotide sequence ID" value="NC_005362.1"/>
</dbReference>
<dbReference type="SMR" id="Q74L74"/>
<dbReference type="GeneID" id="83569770"/>
<dbReference type="KEGG" id="ljo:LJ_0353"/>
<dbReference type="eggNOG" id="COG0256">
    <property type="taxonomic scope" value="Bacteria"/>
</dbReference>
<dbReference type="HOGENOM" id="CLU_098841_0_1_9"/>
<dbReference type="Proteomes" id="UP000000581">
    <property type="component" value="Chromosome"/>
</dbReference>
<dbReference type="GO" id="GO:0022625">
    <property type="term" value="C:cytosolic large ribosomal subunit"/>
    <property type="evidence" value="ECO:0007669"/>
    <property type="project" value="TreeGrafter"/>
</dbReference>
<dbReference type="GO" id="GO:0008097">
    <property type="term" value="F:5S rRNA binding"/>
    <property type="evidence" value="ECO:0007669"/>
    <property type="project" value="TreeGrafter"/>
</dbReference>
<dbReference type="GO" id="GO:0003735">
    <property type="term" value="F:structural constituent of ribosome"/>
    <property type="evidence" value="ECO:0007669"/>
    <property type="project" value="InterPro"/>
</dbReference>
<dbReference type="GO" id="GO:0006412">
    <property type="term" value="P:translation"/>
    <property type="evidence" value="ECO:0007669"/>
    <property type="project" value="UniProtKB-UniRule"/>
</dbReference>
<dbReference type="CDD" id="cd00432">
    <property type="entry name" value="Ribosomal_L18_L5e"/>
    <property type="match status" value="1"/>
</dbReference>
<dbReference type="FunFam" id="3.30.420.100:FF:000001">
    <property type="entry name" value="50S ribosomal protein L18"/>
    <property type="match status" value="1"/>
</dbReference>
<dbReference type="Gene3D" id="3.30.420.100">
    <property type="match status" value="1"/>
</dbReference>
<dbReference type="HAMAP" id="MF_01337_B">
    <property type="entry name" value="Ribosomal_uL18_B"/>
    <property type="match status" value="1"/>
</dbReference>
<dbReference type="InterPro" id="IPR004389">
    <property type="entry name" value="Ribosomal_uL18_bac-type"/>
</dbReference>
<dbReference type="InterPro" id="IPR005484">
    <property type="entry name" value="Ribosomal_uL18_bac/euk"/>
</dbReference>
<dbReference type="NCBIfam" id="TIGR00060">
    <property type="entry name" value="L18_bact"/>
    <property type="match status" value="1"/>
</dbReference>
<dbReference type="PANTHER" id="PTHR12899">
    <property type="entry name" value="39S RIBOSOMAL PROTEIN L18, MITOCHONDRIAL"/>
    <property type="match status" value="1"/>
</dbReference>
<dbReference type="PANTHER" id="PTHR12899:SF3">
    <property type="entry name" value="LARGE RIBOSOMAL SUBUNIT PROTEIN UL18M"/>
    <property type="match status" value="1"/>
</dbReference>
<dbReference type="Pfam" id="PF00861">
    <property type="entry name" value="Ribosomal_L18p"/>
    <property type="match status" value="1"/>
</dbReference>
<dbReference type="SUPFAM" id="SSF53137">
    <property type="entry name" value="Translational machinery components"/>
    <property type="match status" value="1"/>
</dbReference>
<gene>
    <name evidence="1" type="primary">rplR</name>
    <name type="ordered locus">LJ_0353</name>
</gene>
<reference key="1">
    <citation type="journal article" date="2004" name="Proc. Natl. Acad. Sci. U.S.A.">
        <title>The genome sequence of the probiotic intestinal bacterium Lactobacillus johnsonii NCC 533.</title>
        <authorList>
            <person name="Pridmore R.D."/>
            <person name="Berger B."/>
            <person name="Desiere F."/>
            <person name="Vilanova D."/>
            <person name="Barretto C."/>
            <person name="Pittet A.-C."/>
            <person name="Zwahlen M.-C."/>
            <person name="Rouvet M."/>
            <person name="Altermann E."/>
            <person name="Barrangou R."/>
            <person name="Mollet B."/>
            <person name="Mercenier A."/>
            <person name="Klaenhammer T."/>
            <person name="Arigoni F."/>
            <person name="Schell M.A."/>
        </authorList>
    </citation>
    <scope>NUCLEOTIDE SEQUENCE [LARGE SCALE GENOMIC DNA]</scope>
    <source>
        <strain>CNCM I-1225 / La1 / NCC 533</strain>
    </source>
</reference>
<feature type="chain" id="PRO_0000131278" description="Large ribosomal subunit protein uL18">
    <location>
        <begin position="1"/>
        <end position="119"/>
    </location>
</feature>
<protein>
    <recommendedName>
        <fullName evidence="1">Large ribosomal subunit protein uL18</fullName>
    </recommendedName>
    <alternativeName>
        <fullName evidence="2">50S ribosomal protein L18</fullName>
    </alternativeName>
</protein>
<accession>Q74L74</accession>
<comment type="function">
    <text evidence="1">This is one of the proteins that bind and probably mediate the attachment of the 5S RNA into the large ribosomal subunit, where it forms part of the central protuberance.</text>
</comment>
<comment type="subunit">
    <text evidence="1">Part of the 50S ribosomal subunit; part of the 5S rRNA/L5/L18/L25 subcomplex. Contacts the 5S and 23S rRNAs.</text>
</comment>
<comment type="similarity">
    <text evidence="1">Belongs to the universal ribosomal protein uL18 family.</text>
</comment>
<organism>
    <name type="scientific">Lactobacillus johnsonii (strain CNCM I-12250 / La1 / NCC 533)</name>
    <dbReference type="NCBI Taxonomy" id="257314"/>
    <lineage>
        <taxon>Bacteria</taxon>
        <taxon>Bacillati</taxon>
        <taxon>Bacillota</taxon>
        <taxon>Bacilli</taxon>
        <taxon>Lactobacillales</taxon>
        <taxon>Lactobacillaceae</taxon>
        <taxon>Lactobacillus</taxon>
    </lineage>
</organism>
<keyword id="KW-0687">Ribonucleoprotein</keyword>
<keyword id="KW-0689">Ribosomal protein</keyword>
<keyword id="KW-0694">RNA-binding</keyword>
<keyword id="KW-0699">rRNA-binding</keyword>
<name>RL18_LACJO</name>
<proteinExistence type="inferred from homology"/>
<evidence type="ECO:0000255" key="1">
    <source>
        <dbReference type="HAMAP-Rule" id="MF_01337"/>
    </source>
</evidence>
<evidence type="ECO:0000305" key="2"/>